<keyword id="KW-0903">Direct protein sequencing</keyword>
<keyword id="KW-1015">Disulfide bond</keyword>
<keyword id="KW-0646">Protease inhibitor</keyword>
<keyword id="KW-0722">Serine protease inhibitor</keyword>
<protein>
    <recommendedName>
        <fullName>Trypsin inhibitor DE-3</fullName>
    </recommendedName>
</protein>
<feature type="chain" id="PRO_0000083288" description="Trypsin inhibitor DE-3">
    <location>
        <begin position="1"/>
        <end position="172"/>
    </location>
</feature>
<feature type="site" description="Reactive bond for trypsin">
    <location>
        <begin position="63"/>
        <end position="64"/>
    </location>
</feature>
<feature type="disulfide bond" evidence="1">
    <location>
        <begin position="39"/>
        <end position="83"/>
    </location>
</feature>
<feature type="disulfide bond" evidence="1">
    <location>
        <begin position="132"/>
        <end position="139"/>
    </location>
</feature>
<sequence length="172" mass="19258">VLLDGNGEVVQNGGTYYLLPQVWAQGGGVQLAKTGEETCPLTVVQSPNELSDGKPIRIESRLRSTFIPDDDEVRIGFAYAPKCAPSPWWTVVEDEQEGLSVKLSEDESTQFDYPFKFEQVSDKLHSYKLLYCEGKHEKCASIGINRDQKGYRRLVVTEDNPLTVVLKKDESS</sequence>
<accession>P68171</accession>
<accession>P07475</accession>
<comment type="function">
    <text>Inhibition of trypsin.</text>
</comment>
<comment type="similarity">
    <text evidence="2">Belongs to the protease inhibitor I3 (leguminous Kunitz-type inhibitor) family.</text>
</comment>
<reference key="1">
    <citation type="journal article" date="1985" name="J. Biol. Chem.">
        <title>The complete amino acid sequence of trypsin inhibitor DE-3 from Erythrina latissima seeds.</title>
        <authorList>
            <person name="Joubert F.J."/>
            <person name="Heussen C."/>
            <person name="Dowdle E.B.D."/>
        </authorList>
    </citation>
    <scope>PROTEIN SEQUENCE</scope>
    <source>
        <tissue>Seed</tissue>
    </source>
</reference>
<name>IDE3_ERYLA</name>
<organism>
    <name type="scientific">Erythrina latissima</name>
    <name type="common">Broad-leaved coral tree</name>
    <dbReference type="NCBI Taxonomy" id="3844"/>
    <lineage>
        <taxon>Eukaryota</taxon>
        <taxon>Viridiplantae</taxon>
        <taxon>Streptophyta</taxon>
        <taxon>Embryophyta</taxon>
        <taxon>Tracheophyta</taxon>
        <taxon>Spermatophyta</taxon>
        <taxon>Magnoliopsida</taxon>
        <taxon>eudicotyledons</taxon>
        <taxon>Gunneridae</taxon>
        <taxon>Pentapetalae</taxon>
        <taxon>rosids</taxon>
        <taxon>fabids</taxon>
        <taxon>Fabales</taxon>
        <taxon>Fabaceae</taxon>
        <taxon>Papilionoideae</taxon>
        <taxon>50 kb inversion clade</taxon>
        <taxon>NPAAA clade</taxon>
        <taxon>indigoferoid/millettioid clade</taxon>
        <taxon>Phaseoleae</taxon>
        <taxon>Erythrina</taxon>
    </lineage>
</organism>
<proteinExistence type="evidence at protein level"/>
<evidence type="ECO:0000250" key="1"/>
<evidence type="ECO:0000305" key="2"/>
<dbReference type="PIR" id="A24082">
    <property type="entry name" value="A24082"/>
</dbReference>
<dbReference type="SMR" id="P68171"/>
<dbReference type="GO" id="GO:0004867">
    <property type="term" value="F:serine-type endopeptidase inhibitor activity"/>
    <property type="evidence" value="ECO:0007669"/>
    <property type="project" value="UniProtKB-KW"/>
</dbReference>
<dbReference type="CDD" id="cd23362">
    <property type="entry name" value="beta-trefoil_STI_WCI3-like"/>
    <property type="match status" value="1"/>
</dbReference>
<dbReference type="Gene3D" id="2.80.10.50">
    <property type="match status" value="1"/>
</dbReference>
<dbReference type="InterPro" id="IPR011065">
    <property type="entry name" value="Kunitz_inhibitor_STI-like_sf"/>
</dbReference>
<dbReference type="InterPro" id="IPR002160">
    <property type="entry name" value="Prot_inh_Kunz-lg"/>
</dbReference>
<dbReference type="PANTHER" id="PTHR33107">
    <property type="entry name" value="KUNITZ TRYPSIN INHIBITOR 2"/>
    <property type="match status" value="1"/>
</dbReference>
<dbReference type="PANTHER" id="PTHR33107:SF81">
    <property type="entry name" value="TRYPSIN INHIBITOR A"/>
    <property type="match status" value="1"/>
</dbReference>
<dbReference type="Pfam" id="PF00197">
    <property type="entry name" value="Kunitz_legume"/>
    <property type="match status" value="1"/>
</dbReference>
<dbReference type="PRINTS" id="PR00291">
    <property type="entry name" value="KUNITZINHBTR"/>
</dbReference>
<dbReference type="SMART" id="SM00452">
    <property type="entry name" value="STI"/>
    <property type="match status" value="1"/>
</dbReference>
<dbReference type="SUPFAM" id="SSF50386">
    <property type="entry name" value="STI-like"/>
    <property type="match status" value="1"/>
</dbReference>
<dbReference type="PROSITE" id="PS00283">
    <property type="entry name" value="SOYBEAN_KUNITZ"/>
    <property type="match status" value="1"/>
</dbReference>